<feature type="initiator methionine" description="Removed" evidence="3 6">
    <location>
        <position position="1"/>
    </location>
</feature>
<feature type="chain" id="PRO_0000136978" description="Nucleoside diphosphate kinase">
    <location>
        <begin position="2"/>
        <end position="143"/>
    </location>
</feature>
<feature type="active site" description="Pros-phosphohistidine intermediate" evidence="1 2">
    <location>
        <position position="117"/>
    </location>
</feature>
<feature type="binding site" evidence="2">
    <location>
        <position position="11"/>
    </location>
    <ligand>
        <name>ATP</name>
        <dbReference type="ChEBI" id="CHEBI:30616"/>
    </ligand>
</feature>
<feature type="binding site" evidence="2">
    <location>
        <position position="59"/>
    </location>
    <ligand>
        <name>ATP</name>
        <dbReference type="ChEBI" id="CHEBI:30616"/>
    </ligand>
</feature>
<feature type="binding site" evidence="2">
    <location>
        <position position="87"/>
    </location>
    <ligand>
        <name>ATP</name>
        <dbReference type="ChEBI" id="CHEBI:30616"/>
    </ligand>
</feature>
<feature type="binding site" evidence="2">
    <location>
        <position position="93"/>
    </location>
    <ligand>
        <name>ATP</name>
        <dbReference type="ChEBI" id="CHEBI:30616"/>
    </ligand>
</feature>
<feature type="binding site" evidence="2">
    <location>
        <position position="104"/>
    </location>
    <ligand>
        <name>ATP</name>
        <dbReference type="ChEBI" id="CHEBI:30616"/>
    </ligand>
</feature>
<feature type="binding site" evidence="2">
    <location>
        <position position="114"/>
    </location>
    <ligand>
        <name>ATP</name>
        <dbReference type="ChEBI" id="CHEBI:30616"/>
    </ligand>
</feature>
<feature type="modified residue" description="Phosphoserine" evidence="5">
    <location>
        <position position="119"/>
    </location>
</feature>
<feature type="modified residue" description="Phosphoserine" evidence="5">
    <location>
        <position position="121"/>
    </location>
</feature>
<feature type="mutagenesis site" description="Still autophosphorylates. No change in kinase activity." evidence="5">
    <original>S</original>
    <variation>A</variation>
    <location>
        <position position="119"/>
    </location>
</feature>
<feature type="mutagenesis site" description="Still autophosphorylates. No change in kinase activity." evidence="5">
    <original>S</original>
    <variation>A</variation>
    <location>
        <position position="121"/>
    </location>
</feature>
<feature type="strand" evidence="10">
    <location>
        <begin position="3"/>
        <end position="10"/>
    </location>
</feature>
<feature type="helix" evidence="10">
    <location>
        <begin position="12"/>
        <end position="16"/>
    </location>
</feature>
<feature type="helix" evidence="10">
    <location>
        <begin position="20"/>
        <end position="29"/>
    </location>
</feature>
<feature type="strand" evidence="10">
    <location>
        <begin position="33"/>
        <end position="40"/>
    </location>
</feature>
<feature type="helix" evidence="10">
    <location>
        <begin position="44"/>
        <end position="50"/>
    </location>
</feature>
<feature type="helix" evidence="10">
    <location>
        <begin position="52"/>
        <end position="54"/>
    </location>
</feature>
<feature type="helix" evidence="10">
    <location>
        <begin position="60"/>
        <end position="67"/>
    </location>
</feature>
<feature type="strand" evidence="10">
    <location>
        <begin position="72"/>
        <end position="80"/>
    </location>
</feature>
<feature type="helix" evidence="10">
    <location>
        <begin position="82"/>
        <end position="90"/>
    </location>
</feature>
<feature type="turn" evidence="10">
    <location>
        <begin position="95"/>
        <end position="97"/>
    </location>
</feature>
<feature type="helix" evidence="10">
    <location>
        <begin position="103"/>
        <end position="107"/>
    </location>
</feature>
<feature type="strand" evidence="10">
    <location>
        <begin position="109"/>
        <end position="111"/>
    </location>
</feature>
<feature type="strand" evidence="10">
    <location>
        <begin position="115"/>
        <end position="118"/>
    </location>
</feature>
<feature type="helix" evidence="10">
    <location>
        <begin position="122"/>
        <end position="132"/>
    </location>
</feature>
<accession>P0A763</accession>
<accession>P24233</accession>
<evidence type="ECO:0000250" key="1">
    <source>
        <dbReference type="UniProtKB" id="P15531"/>
    </source>
</evidence>
<evidence type="ECO:0000255" key="2">
    <source>
        <dbReference type="HAMAP-Rule" id="MF_00451"/>
    </source>
</evidence>
<evidence type="ECO:0000269" key="3">
    <source>
    </source>
</evidence>
<evidence type="ECO:0000269" key="4">
    <source>
    </source>
</evidence>
<evidence type="ECO:0000269" key="5">
    <source>
    </source>
</evidence>
<evidence type="ECO:0000269" key="6">
    <source ref="6"/>
</evidence>
<evidence type="ECO:0000303" key="7">
    <source>
    </source>
</evidence>
<evidence type="ECO:0000305" key="8"/>
<evidence type="ECO:0007744" key="9">
    <source>
        <dbReference type="PDB" id="2HUR"/>
    </source>
</evidence>
<evidence type="ECO:0007829" key="10">
    <source>
        <dbReference type="PDB" id="2HUR"/>
    </source>
</evidence>
<name>NDK_ECOLI</name>
<gene>
    <name evidence="2 7" type="primary">ndk</name>
    <name type="ordered locus">b2518</name>
    <name type="ordered locus">JW2502</name>
</gene>
<comment type="function">
    <text evidence="2 5">Major role in the synthesis of nucleoside triphosphates other than ATP. The ATP gamma phosphate is transferred to the NDP beta phosphate via a ping-pong mechanism, using a phosphorylated active-site intermediate.</text>
</comment>
<comment type="catalytic activity">
    <reaction evidence="2 5">
        <text>a 2'-deoxyribonucleoside 5'-diphosphate + ATP = a 2'-deoxyribonucleoside 5'-triphosphate + ADP</text>
        <dbReference type="Rhea" id="RHEA:44640"/>
        <dbReference type="ChEBI" id="CHEBI:30616"/>
        <dbReference type="ChEBI" id="CHEBI:61560"/>
        <dbReference type="ChEBI" id="CHEBI:73316"/>
        <dbReference type="ChEBI" id="CHEBI:456216"/>
        <dbReference type="EC" id="2.7.4.6"/>
    </reaction>
</comment>
<comment type="catalytic activity">
    <reaction evidence="2 5">
        <text>a ribonucleoside 5'-diphosphate + ATP = a ribonucleoside 5'-triphosphate + ADP</text>
        <dbReference type="Rhea" id="RHEA:18113"/>
        <dbReference type="ChEBI" id="CHEBI:30616"/>
        <dbReference type="ChEBI" id="CHEBI:57930"/>
        <dbReference type="ChEBI" id="CHEBI:61557"/>
        <dbReference type="ChEBI" id="CHEBI:456216"/>
        <dbReference type="EC" id="2.7.4.6"/>
    </reaction>
</comment>
<comment type="cofactor">
    <cofactor evidence="2">
        <name>Mg(2+)</name>
        <dbReference type="ChEBI" id="CHEBI:18420"/>
    </cofactor>
</comment>
<comment type="subunit">
    <text evidence="2 4 5">Homotetramer.</text>
</comment>
<comment type="interaction">
    <interactant intactId="EBI-370139">
        <id>P0A763</id>
    </interactant>
    <interactant intactId="EBI-559403">
        <id>P12295</id>
        <label>ung</label>
    </interactant>
    <organismsDiffer>false</organismsDiffer>
    <experiments>3</experiments>
</comment>
<comment type="interaction">
    <interactant intactId="EBI-370139">
        <id>P0A763</id>
    </interactant>
    <interactant intactId="EBI-555094">
        <id>P0AC28</id>
        <label>ygfA</label>
    </interactant>
    <organismsDiffer>false</organismsDiffer>
    <experiments>5</experiments>
</comment>
<comment type="subcellular location">
    <subcellularLocation>
        <location evidence="2 8">Cytoplasm</location>
    </subcellularLocation>
</comment>
<comment type="similarity">
    <text evidence="2 8">Belongs to the NDK family.</text>
</comment>
<organism>
    <name type="scientific">Escherichia coli (strain K12)</name>
    <dbReference type="NCBI Taxonomy" id="83333"/>
    <lineage>
        <taxon>Bacteria</taxon>
        <taxon>Pseudomonadati</taxon>
        <taxon>Pseudomonadota</taxon>
        <taxon>Gammaproteobacteria</taxon>
        <taxon>Enterobacterales</taxon>
        <taxon>Enterobacteriaceae</taxon>
        <taxon>Escherichia</taxon>
    </lineage>
</organism>
<reference key="1">
    <citation type="journal article" date="1991" name="Gene">
        <title>Nucleoside diphosphate kinase from Escherichia coli; its overproduction and sequence comparison with eukaryotic enzymes.</title>
        <authorList>
            <person name="Hama H."/>
            <person name="Almaula N."/>
            <person name="Lerner C.G."/>
            <person name="Inouye S."/>
            <person name="Inouye M."/>
        </authorList>
    </citation>
    <scope>NUCLEOTIDE SEQUENCE [GENOMIC DNA]</scope>
    <source>
        <strain>K12</strain>
    </source>
</reference>
<reference key="2">
    <citation type="journal article" date="1997" name="DNA Res.">
        <title>Construction of a contiguous 874-kb sequence of the Escherichia coli-K12 genome corresponding to 50.0-68.8 min on the linkage map and analysis of its sequence features.</title>
        <authorList>
            <person name="Yamamoto Y."/>
            <person name="Aiba H."/>
            <person name="Baba T."/>
            <person name="Hayashi K."/>
            <person name="Inada T."/>
            <person name="Isono K."/>
            <person name="Itoh T."/>
            <person name="Kimura S."/>
            <person name="Kitagawa M."/>
            <person name="Makino K."/>
            <person name="Miki T."/>
            <person name="Mitsuhashi N."/>
            <person name="Mizobuchi K."/>
            <person name="Mori H."/>
            <person name="Nakade S."/>
            <person name="Nakamura Y."/>
            <person name="Nashimoto H."/>
            <person name="Oshima T."/>
            <person name="Oyama S."/>
            <person name="Saito N."/>
            <person name="Sampei G."/>
            <person name="Satoh Y."/>
            <person name="Sivasundaram S."/>
            <person name="Tagami H."/>
            <person name="Takahashi H."/>
            <person name="Takeda J."/>
            <person name="Takemoto K."/>
            <person name="Uehara K."/>
            <person name="Wada C."/>
            <person name="Yamagata S."/>
            <person name="Horiuchi T."/>
        </authorList>
    </citation>
    <scope>NUCLEOTIDE SEQUENCE [LARGE SCALE GENOMIC DNA]</scope>
    <source>
        <strain>K12 / W3110 / ATCC 27325 / DSM 5911</strain>
    </source>
</reference>
<reference key="3">
    <citation type="journal article" date="1997" name="Science">
        <title>The complete genome sequence of Escherichia coli K-12.</title>
        <authorList>
            <person name="Blattner F.R."/>
            <person name="Plunkett G. III"/>
            <person name="Bloch C.A."/>
            <person name="Perna N.T."/>
            <person name="Burland V."/>
            <person name="Riley M."/>
            <person name="Collado-Vides J."/>
            <person name="Glasner J.D."/>
            <person name="Rode C.K."/>
            <person name="Mayhew G.F."/>
            <person name="Gregor J."/>
            <person name="Davis N.W."/>
            <person name="Kirkpatrick H.A."/>
            <person name="Goeden M.A."/>
            <person name="Rose D.J."/>
            <person name="Mau B."/>
            <person name="Shao Y."/>
        </authorList>
    </citation>
    <scope>NUCLEOTIDE SEQUENCE [LARGE SCALE GENOMIC DNA]</scope>
    <source>
        <strain>K12 / MG1655 / ATCC 47076</strain>
    </source>
</reference>
<reference key="4">
    <citation type="journal article" date="2006" name="Mol. Syst. Biol.">
        <title>Highly accurate genome sequences of Escherichia coli K-12 strains MG1655 and W3110.</title>
        <authorList>
            <person name="Hayashi K."/>
            <person name="Morooka N."/>
            <person name="Yamamoto Y."/>
            <person name="Fujita K."/>
            <person name="Isono K."/>
            <person name="Choi S."/>
            <person name="Ohtsubo E."/>
            <person name="Baba T."/>
            <person name="Wanner B.L."/>
            <person name="Mori H."/>
            <person name="Horiuchi T."/>
        </authorList>
    </citation>
    <scope>NUCLEOTIDE SEQUENCE [LARGE SCALE GENOMIC DNA]</scope>
    <source>
        <strain>K12 / W3110 / ATCC 27325 / DSM 5911</strain>
    </source>
</reference>
<reference key="5">
    <citation type="journal article" date="1992" name="Curr. Top. Cell. Regul.">
        <title>Nucleoside diphosphokinase: a functional link between intermediary metabolism and nucleic acid synthesis.</title>
        <authorList>
            <person name="Ray N.B."/>
            <person name="Mathews C.K."/>
        </authorList>
    </citation>
    <scope>PROTEIN SEQUENCE OF 2-46</scope>
</reference>
<reference key="6">
    <citation type="submission" date="1996-02" db="UniProtKB">
        <authorList>
            <person name="Frutiger S."/>
            <person name="Hughes G.J."/>
            <person name="Pasquali C."/>
            <person name="Hochstrasser D.F."/>
        </authorList>
    </citation>
    <scope>PROTEIN SEQUENCE OF 2-12</scope>
    <source>
        <strain>K12 / W3110 / ATCC 27325 / DSM 5911</strain>
    </source>
</reference>
<reference key="7">
    <citation type="journal article" date="1995" name="J. Bacteriol.">
        <title>Nucleoside diphosphate kinase from Escherichia coli.</title>
        <authorList>
            <person name="Almaula N."/>
            <person name="Lu Q."/>
            <person name="Delgado J."/>
            <person name="Belkin S."/>
            <person name="Inouye M."/>
        </authorList>
    </citation>
    <scope>PARTIAL PROTEIN SEQUENCE</scope>
    <scope>FUNCTION</scope>
    <scope>CATALYTIC ACTIVITY</scope>
    <scope>SUBUNIT</scope>
    <scope>PHOSPHORYLATION AT SER-119 AND SER-121</scope>
    <scope>MUTAGENESIS OF SER-119 AND SER-121</scope>
</reference>
<reference evidence="9" key="8">
    <citation type="journal article" date="2007" name="Proteins">
        <title>The structure of the Escherichia coli nucleoside diphosphate kinase reveals a new quaternary architecture for this enzyme family.</title>
        <authorList>
            <person name="Moynie L."/>
            <person name="Giraud M.F."/>
            <person name="Georgescauld F."/>
            <person name="Lascu I."/>
            <person name="Dautant A."/>
        </authorList>
    </citation>
    <scope>X-RAY CRYSTALLOGRAPHY (1.62 ANGSTROMS) OF 2-143</scope>
    <scope>SUBUNIT</scope>
</reference>
<keyword id="KW-0002">3D-structure</keyword>
<keyword id="KW-0067">ATP-binding</keyword>
<keyword id="KW-0963">Cytoplasm</keyword>
<keyword id="KW-0903">Direct protein sequencing</keyword>
<keyword id="KW-0418">Kinase</keyword>
<keyword id="KW-0460">Magnesium</keyword>
<keyword id="KW-0479">Metal-binding</keyword>
<keyword id="KW-0546">Nucleotide metabolism</keyword>
<keyword id="KW-0547">Nucleotide-binding</keyword>
<keyword id="KW-0597">Phosphoprotein</keyword>
<keyword id="KW-1185">Reference proteome</keyword>
<keyword id="KW-0808">Transferase</keyword>
<dbReference type="EC" id="2.7.4.6" evidence="2 5"/>
<dbReference type="EMBL" id="X57555">
    <property type="protein sequence ID" value="CAA40780.1"/>
    <property type="molecule type" value="Genomic_DNA"/>
</dbReference>
<dbReference type="EMBL" id="U00096">
    <property type="protein sequence ID" value="AAC75571.1"/>
    <property type="molecule type" value="Genomic_DNA"/>
</dbReference>
<dbReference type="EMBL" id="AP009048">
    <property type="protein sequence ID" value="BAA16405.1"/>
    <property type="molecule type" value="Genomic_DNA"/>
</dbReference>
<dbReference type="PIR" id="JH0495">
    <property type="entry name" value="JH0495"/>
</dbReference>
<dbReference type="RefSeq" id="NP_417013.1">
    <property type="nucleotide sequence ID" value="NC_000913.3"/>
</dbReference>
<dbReference type="RefSeq" id="WP_000963837.1">
    <property type="nucleotide sequence ID" value="NZ_STEB01000011.1"/>
</dbReference>
<dbReference type="PDB" id="2HUR">
    <property type="method" value="X-ray"/>
    <property type="resolution" value="1.62 A"/>
    <property type="chains" value="A/B/C/D/E/F=2-143"/>
</dbReference>
<dbReference type="PDBsum" id="2HUR"/>
<dbReference type="SMR" id="P0A763"/>
<dbReference type="BioGRID" id="4259709">
    <property type="interactions" value="43"/>
</dbReference>
<dbReference type="BioGRID" id="849983">
    <property type="interactions" value="1"/>
</dbReference>
<dbReference type="DIP" id="DIP-31870N"/>
<dbReference type="FunCoup" id="P0A763">
    <property type="interactions" value="836"/>
</dbReference>
<dbReference type="IntAct" id="P0A763">
    <property type="interactions" value="7"/>
</dbReference>
<dbReference type="STRING" id="511145.b2518"/>
<dbReference type="iPTMnet" id="P0A763"/>
<dbReference type="jPOST" id="P0A763"/>
<dbReference type="PaxDb" id="511145-b2518"/>
<dbReference type="EnsemblBacteria" id="AAC75571">
    <property type="protein sequence ID" value="AAC75571"/>
    <property type="gene ID" value="b2518"/>
</dbReference>
<dbReference type="GeneID" id="93774618"/>
<dbReference type="GeneID" id="945611"/>
<dbReference type="KEGG" id="ecj:JW2502"/>
<dbReference type="KEGG" id="eco:b2518"/>
<dbReference type="KEGG" id="ecoc:C3026_13960"/>
<dbReference type="PATRIC" id="fig|1411691.4.peg.4218"/>
<dbReference type="EchoBASE" id="EB0644"/>
<dbReference type="eggNOG" id="COG0105">
    <property type="taxonomic scope" value="Bacteria"/>
</dbReference>
<dbReference type="HOGENOM" id="CLU_060216_8_1_6"/>
<dbReference type="InParanoid" id="P0A763"/>
<dbReference type="OMA" id="QHYGEHK"/>
<dbReference type="OrthoDB" id="9801161at2"/>
<dbReference type="PhylomeDB" id="P0A763"/>
<dbReference type="BioCyc" id="EcoCyc:NUCLEOSIDE-DIP-KIN-MONOMER"/>
<dbReference type="BioCyc" id="MetaCyc:NUCLEOSIDE-DIP-KIN-MONOMER"/>
<dbReference type="BRENDA" id="2.7.4.6">
    <property type="organism ID" value="2026"/>
</dbReference>
<dbReference type="EvolutionaryTrace" id="P0A763"/>
<dbReference type="PRO" id="PR:P0A763"/>
<dbReference type="Proteomes" id="UP000000625">
    <property type="component" value="Chromosome"/>
</dbReference>
<dbReference type="GO" id="GO:0005829">
    <property type="term" value="C:cytosol"/>
    <property type="evidence" value="ECO:0000314"/>
    <property type="project" value="EcoCyc"/>
</dbReference>
<dbReference type="GO" id="GO:0005524">
    <property type="term" value="F:ATP binding"/>
    <property type="evidence" value="ECO:0007669"/>
    <property type="project" value="UniProtKB-UniRule"/>
</dbReference>
<dbReference type="GO" id="GO:0046872">
    <property type="term" value="F:metal ion binding"/>
    <property type="evidence" value="ECO:0007669"/>
    <property type="project" value="UniProtKB-KW"/>
</dbReference>
<dbReference type="GO" id="GO:0004550">
    <property type="term" value="F:nucleoside diphosphate kinase activity"/>
    <property type="evidence" value="ECO:0000314"/>
    <property type="project" value="EcoCyc"/>
</dbReference>
<dbReference type="GO" id="GO:0006241">
    <property type="term" value="P:CTP biosynthetic process"/>
    <property type="evidence" value="ECO:0007669"/>
    <property type="project" value="UniProtKB-UniRule"/>
</dbReference>
<dbReference type="GO" id="GO:0006183">
    <property type="term" value="P:GTP biosynthetic process"/>
    <property type="evidence" value="ECO:0007669"/>
    <property type="project" value="UniProtKB-UniRule"/>
</dbReference>
<dbReference type="GO" id="GO:0006163">
    <property type="term" value="P:purine nucleotide metabolic process"/>
    <property type="evidence" value="ECO:0000318"/>
    <property type="project" value="GO_Central"/>
</dbReference>
<dbReference type="GO" id="GO:0006220">
    <property type="term" value="P:pyrimidine nucleotide metabolic process"/>
    <property type="evidence" value="ECO:0000318"/>
    <property type="project" value="GO_Central"/>
</dbReference>
<dbReference type="GO" id="GO:0006228">
    <property type="term" value="P:UTP biosynthetic process"/>
    <property type="evidence" value="ECO:0007669"/>
    <property type="project" value="UniProtKB-UniRule"/>
</dbReference>
<dbReference type="CDD" id="cd04413">
    <property type="entry name" value="NDPk_I"/>
    <property type="match status" value="1"/>
</dbReference>
<dbReference type="FunFam" id="3.30.70.141:FF:000001">
    <property type="entry name" value="Nucleoside diphosphate kinase"/>
    <property type="match status" value="1"/>
</dbReference>
<dbReference type="Gene3D" id="3.30.70.141">
    <property type="entry name" value="Nucleoside diphosphate kinase-like domain"/>
    <property type="match status" value="1"/>
</dbReference>
<dbReference type="HAMAP" id="MF_00451">
    <property type="entry name" value="NDP_kinase"/>
    <property type="match status" value="1"/>
</dbReference>
<dbReference type="InterPro" id="IPR034907">
    <property type="entry name" value="NDK-like_dom"/>
</dbReference>
<dbReference type="InterPro" id="IPR036850">
    <property type="entry name" value="NDK-like_dom_sf"/>
</dbReference>
<dbReference type="InterPro" id="IPR001564">
    <property type="entry name" value="Nucleoside_diP_kinase"/>
</dbReference>
<dbReference type="InterPro" id="IPR023005">
    <property type="entry name" value="Nucleoside_diP_kinase_AS"/>
</dbReference>
<dbReference type="NCBIfam" id="NF001908">
    <property type="entry name" value="PRK00668.1"/>
    <property type="match status" value="1"/>
</dbReference>
<dbReference type="PANTHER" id="PTHR46161">
    <property type="entry name" value="NUCLEOSIDE DIPHOSPHATE KINASE"/>
    <property type="match status" value="1"/>
</dbReference>
<dbReference type="PANTHER" id="PTHR46161:SF3">
    <property type="entry name" value="NUCLEOSIDE DIPHOSPHATE KINASE DDB_G0292928-RELATED"/>
    <property type="match status" value="1"/>
</dbReference>
<dbReference type="Pfam" id="PF00334">
    <property type="entry name" value="NDK"/>
    <property type="match status" value="1"/>
</dbReference>
<dbReference type="PRINTS" id="PR01243">
    <property type="entry name" value="NUCDPKINASE"/>
</dbReference>
<dbReference type="SMART" id="SM00562">
    <property type="entry name" value="NDK"/>
    <property type="match status" value="1"/>
</dbReference>
<dbReference type="SUPFAM" id="SSF54919">
    <property type="entry name" value="Nucleoside diphosphate kinase, NDK"/>
    <property type="match status" value="1"/>
</dbReference>
<dbReference type="PROSITE" id="PS00469">
    <property type="entry name" value="NDPK"/>
    <property type="match status" value="1"/>
</dbReference>
<dbReference type="PROSITE" id="PS51374">
    <property type="entry name" value="NDPK_LIKE"/>
    <property type="match status" value="1"/>
</dbReference>
<sequence length="143" mass="15463">MAIERTFSIIKPNAVAKNVIGNIFARFEAAGFKIVGTKMLHLTVEQARGFYAEHDGKPFFDGLVEFMTSGPIVVSVLEGENAVQRHRDLLGATNPANALAGTLRADYADSLTENGTHGSDSVESAAREIAYFFGEGEVCPRTR</sequence>
<proteinExistence type="evidence at protein level"/>
<protein>
    <recommendedName>
        <fullName evidence="2 7">Nucleoside diphosphate kinase</fullName>
        <shortName evidence="2 7">NDK</shortName>
        <shortName evidence="2 7">NDP kinase</shortName>
        <ecNumber evidence="2 5">2.7.4.6</ecNumber>
    </recommendedName>
    <alternativeName>
        <fullName evidence="2 8">Nucleoside-2-P kinase</fullName>
    </alternativeName>
</protein>